<comment type="subcellular location">
    <subcellularLocation>
        <location evidence="1">Secreted</location>
    </subcellularLocation>
</comment>
<comment type="similarity">
    <text evidence="3">Belongs to the DEFL family.</text>
</comment>
<comment type="caution">
    <text evidence="3">Lacks 1 of the 4 disulfide bonds, which are conserved features of the family.</text>
</comment>
<proteinExistence type="inferred from homology"/>
<organism>
    <name type="scientific">Arabidopsis thaliana</name>
    <name type="common">Mouse-ear cress</name>
    <dbReference type="NCBI Taxonomy" id="3702"/>
    <lineage>
        <taxon>Eukaryota</taxon>
        <taxon>Viridiplantae</taxon>
        <taxon>Streptophyta</taxon>
        <taxon>Embryophyta</taxon>
        <taxon>Tracheophyta</taxon>
        <taxon>Spermatophyta</taxon>
        <taxon>Magnoliopsida</taxon>
        <taxon>eudicotyledons</taxon>
        <taxon>Gunneridae</taxon>
        <taxon>Pentapetalae</taxon>
        <taxon>rosids</taxon>
        <taxon>malvids</taxon>
        <taxon>Brassicales</taxon>
        <taxon>Brassicaceae</taxon>
        <taxon>Camelineae</taxon>
        <taxon>Arabidopsis</taxon>
    </lineage>
</organism>
<evidence type="ECO:0000250" key="1"/>
<evidence type="ECO:0000255" key="2"/>
<evidence type="ECO:0000305" key="3"/>
<keyword id="KW-0929">Antimicrobial</keyword>
<keyword id="KW-1015">Disulfide bond</keyword>
<keyword id="KW-0295">Fungicide</keyword>
<keyword id="KW-0611">Plant defense</keyword>
<keyword id="KW-1185">Reference proteome</keyword>
<keyword id="KW-0964">Secreted</keyword>
<keyword id="KW-0732">Signal</keyword>
<accession>Q2L6T1</accession>
<sequence length="93" mass="10208">MTKIGFYLATYATIYIILSPGLLATAARENLHHQCFCESPSKCDCFPTTPTPPTSVNKSRKGGPLCTTDGDCKHFCRPKKGVCNIDFETCICQ</sequence>
<dbReference type="EMBL" id="AB009049">
    <property type="status" value="NOT_ANNOTATED_CDS"/>
    <property type="molecule type" value="Genomic_DNA"/>
</dbReference>
<dbReference type="EMBL" id="CP002688">
    <property type="protein sequence ID" value="AED96755.1"/>
    <property type="molecule type" value="Genomic_DNA"/>
</dbReference>
<dbReference type="RefSeq" id="NP_001032082.1">
    <property type="nucleotide sequence ID" value="NM_001037005.2"/>
</dbReference>
<dbReference type="GlyGen" id="Q2L6T1">
    <property type="glycosylation" value="1 site"/>
</dbReference>
<dbReference type="PaxDb" id="3702-AT5G56369.1"/>
<dbReference type="ProteomicsDB" id="224570"/>
<dbReference type="EnsemblPlants" id="AT5G56369.1">
    <property type="protein sequence ID" value="AT5G56369.1"/>
    <property type="gene ID" value="AT5G56369"/>
</dbReference>
<dbReference type="GeneID" id="3771520"/>
<dbReference type="Gramene" id="AT5G56369.1">
    <property type="protein sequence ID" value="AT5G56369.1"/>
    <property type="gene ID" value="AT5G56369"/>
</dbReference>
<dbReference type="KEGG" id="ath:AT5G56369"/>
<dbReference type="Araport" id="AT5G56369"/>
<dbReference type="TAIR" id="AT5G56369"/>
<dbReference type="HOGENOM" id="CLU_2402691_0_0_1"/>
<dbReference type="InParanoid" id="Q2L6T1"/>
<dbReference type="OMA" id="QCFCESP"/>
<dbReference type="PRO" id="PR:Q2L6T1"/>
<dbReference type="Proteomes" id="UP000006548">
    <property type="component" value="Chromosome 5"/>
</dbReference>
<dbReference type="ExpressionAtlas" id="Q2L6T1">
    <property type="expression patterns" value="baseline and differential"/>
</dbReference>
<dbReference type="GO" id="GO:0005576">
    <property type="term" value="C:extracellular region"/>
    <property type="evidence" value="ECO:0007669"/>
    <property type="project" value="UniProtKB-SubCell"/>
</dbReference>
<dbReference type="GO" id="GO:0050832">
    <property type="term" value="P:defense response to fungus"/>
    <property type="evidence" value="ECO:0007669"/>
    <property type="project" value="UniProtKB-KW"/>
</dbReference>
<dbReference type="GO" id="GO:0031640">
    <property type="term" value="P:killing of cells of another organism"/>
    <property type="evidence" value="ECO:0007669"/>
    <property type="project" value="UniProtKB-KW"/>
</dbReference>
<gene>
    <name type="ordered locus">At5g56369</name>
    <name type="ORF">MCD7</name>
</gene>
<reference key="1">
    <citation type="journal article" date="1998" name="DNA Res.">
        <title>Structural analysis of Arabidopsis thaliana chromosome 5. IV. Sequence features of the regions of 1,456,315 bp covered by nineteen physically assigned P1 and TAC clones.</title>
        <authorList>
            <person name="Sato S."/>
            <person name="Kaneko T."/>
            <person name="Kotani H."/>
            <person name="Nakamura Y."/>
            <person name="Asamizu E."/>
            <person name="Miyajima N."/>
            <person name="Tabata S."/>
        </authorList>
    </citation>
    <scope>NUCLEOTIDE SEQUENCE [LARGE SCALE GENOMIC DNA]</scope>
    <source>
        <strain>cv. Columbia</strain>
    </source>
</reference>
<reference key="2">
    <citation type="journal article" date="2017" name="Plant J.">
        <title>Araport11: a complete reannotation of the Arabidopsis thaliana reference genome.</title>
        <authorList>
            <person name="Cheng C.Y."/>
            <person name="Krishnakumar V."/>
            <person name="Chan A.P."/>
            <person name="Thibaud-Nissen F."/>
            <person name="Schobel S."/>
            <person name="Town C.D."/>
        </authorList>
    </citation>
    <scope>GENOME REANNOTATION</scope>
    <source>
        <strain>cv. Columbia</strain>
    </source>
</reference>
<reference key="3">
    <citation type="journal article" date="2005" name="Plant Physiol.">
        <title>Genome organization of more than 300 defensin-like genes in Arabidopsis.</title>
        <authorList>
            <person name="Silverstein K.A.T."/>
            <person name="Graham M.A."/>
            <person name="Paape T.D."/>
            <person name="VandenBosch K.A."/>
        </authorList>
    </citation>
    <scope>GENE FAMILY</scope>
</reference>
<feature type="signal peptide" evidence="2">
    <location>
        <begin position="1"/>
        <end position="24"/>
    </location>
</feature>
<feature type="chain" id="PRO_0000379744" description="Putative defensin-like protein 283">
    <location>
        <begin position="25"/>
        <end position="93"/>
    </location>
</feature>
<feature type="disulfide bond" evidence="1">
    <location>
        <begin position="43"/>
        <end position="83"/>
    </location>
</feature>
<feature type="disulfide bond" evidence="1">
    <location>
        <begin position="66"/>
        <end position="90"/>
    </location>
</feature>
<feature type="disulfide bond" evidence="1">
    <location>
        <begin position="72"/>
        <end position="92"/>
    </location>
</feature>
<protein>
    <recommendedName>
        <fullName>Putative defensin-like protein 283</fullName>
    </recommendedName>
</protein>
<name>DF283_ARATH</name>